<comment type="function">
    <text evidence="1 2 3 4 5 6">Potent antimicrobial peptide that acts by disrupting bacterial membrane (PubMed:21745529, PubMed:22450985). Is active against both Gram-positive and Gram-negative bacteria (B.subtilis (MIC=15 ug/ml or 4-16 uM), S.epidermidis (MIC=8-16 uM), S.aureus (MIC=15 ug/ml or 4 uM), E.coli (MIC=8-64 uM) and P.aeruginosa (MIC=64-128 uM)) (PubMed:16129513, PubMed:22450985, PubMed:23836163, PubMed:30534613). Also shows cytotoxicity towards HEK293 cells (32 uM) (PubMed:30534613). Adopts an amphipathic alpha helical conformation, that may allow to partition into the target membrane (PubMed:21745529, PubMed:23836163). Also acts in inflammation since it is chemotactic for polymorphonucleated leukocytes (PMNL) (PubMed:16129513). Shows potent antitumor activity against prostate (PC-3) and bladder (Biu-87) cancer cell lines (PubMed:21745529). Causes a reduced hemolysis to mammalian erythrocytes (HC(50)=50 uM) and has no mast cell degranulation activity at physiological concentrations (PubMed:16129513, PubMed:30534613). In addition, when tested in vitro on the parasite Trypanosoma cruzi (responsible of the Chagas disease), is able to reduce the number of the three forms (epimastigote, trypomastigote and amastigote), probably acting through the apoptotic cell death pathway (PubMed:32360153).</text>
</comment>
<comment type="biophysicochemical properties">
    <temperatureDependence>
        <text evidence="3">Is stable between 20 and 100 degrees Celsius.</text>
    </temperatureDependence>
</comment>
<comment type="subcellular location">
    <subcellularLocation>
        <location evidence="1">Secreted</location>
    </subcellularLocation>
    <subcellularLocation>
        <location evidence="2 3">Target cell membrane</location>
    </subcellularLocation>
</comment>
<comment type="tissue specificity">
    <text evidence="11">Expressed by the venom gland.</text>
</comment>
<comment type="mass spectrometry" mass="1239.73" method="Electrospray" evidence="1"/>
<comment type="pharmaceutical">
    <text evidence="13">Promising drug candidate or lead for the development of new drugs to treat Chagas disease (also called American Trypanosomiasis).</text>
</comment>
<comment type="pharmaceutical">
    <text evidence="12">The [Lys]7-Pol-CP-NH2 analog is a promising drug lead for the treatment of drug-resistant infection. It demonstrates anti-infective activity against P.aeruginosa, when tested in vivo on a skin infection mice model.</text>
</comment>
<comment type="similarity">
    <text evidence="10">Belongs to the MCD family. Protonectin subfamily.</text>
</comment>
<comment type="online information" name="Protein Spotlight">
    <link uri="https://www.proteinspotlight.org/back_issues/229/"/>
    <text>A wasp's sting - Issue 229 of October 2020</text>
</comment>
<name>PROTO_POLPI</name>
<keyword id="KW-0027">Amidation</keyword>
<keyword id="KW-0044">Antibiotic</keyword>
<keyword id="KW-0929">Antimicrobial</keyword>
<keyword id="KW-0145">Chemotaxis</keyword>
<keyword id="KW-0903">Direct protein sequencing</keyword>
<keyword id="KW-0391">Immunity</keyword>
<keyword id="KW-0399">Innate immunity</keyword>
<keyword id="KW-0472">Membrane</keyword>
<keyword id="KW-0582">Pharmaceutical</keyword>
<keyword id="KW-0964">Secreted</keyword>
<keyword id="KW-1052">Target cell membrane</keyword>
<keyword id="KW-1053">Target membrane</keyword>
<accession>P0C1R0</accession>
<accession>P84879</accession>
<sequence length="12" mass="1241">ILGTILGLLKSL</sequence>
<feature type="peptide" id="PRO_0000247269" description="Polybia-CP" evidence="1">
    <location>
        <begin position="1"/>
        <end position="12"/>
    </location>
</feature>
<feature type="modified residue" description="Leucine amide" evidence="1">
    <location>
        <position position="12"/>
    </location>
</feature>
<feature type="mutagenesis site" description="No change in antibacterial activity, complete loss of hemolytic activity, and complete loss in cytotoxicity towards HEK293 cells." evidence="5">
    <original>I</original>
    <variation>G</variation>
    <location>
        <position position="1"/>
    </location>
</feature>
<feature type="mutagenesis site" description="Increase in antibacterial activity." evidence="5">
    <original>T</original>
    <variation>A</variation>
    <location>
        <position position="4"/>
    </location>
</feature>
<feature type="mutagenesis site" description="Increase in antibacterial activity, moderate increase in resistance to protease-mediated degradation, complete loss of hemolytic activity, and no change in cytotoxicity towards HEK293 cells." evidence="5">
    <original>T</original>
    <variation>K</variation>
    <location>
        <position position="4"/>
    </location>
</feature>
<feature type="mutagenesis site" description="Important decrease in antibacterial activity, important decrease in helical content, and complete loss in cytotoxicity towards HEK293 cells." evidence="5">
    <original>I</original>
    <variation>A</variation>
    <location>
        <position position="5"/>
    </location>
</feature>
<feature type="mutagenesis site" description="Important increase in antibacterial activity and important decrease in helical content." evidence="5">
    <original>L</original>
    <variation>A</variation>
    <location>
        <position position="6"/>
    </location>
</feature>
<feature type="mutagenesis site" description="Important increase in antibacterial activity, important increase in helical content, and no change in cytotoxicity towards HEK293 cells." evidence="5">
    <original>G</original>
    <variation>A</variation>
    <location>
        <position position="7"/>
    </location>
</feature>
<feature type="mutagenesis site" description="Important increase in antibacterial activity, increase in helical content, important increase in resistance to protease-mediated degradation, increase in hemolytic activity, and weak increase in cytotoxicity towards HEK293 cells." evidence="5">
    <original>G</original>
    <variation>K</variation>
    <location>
        <position position="7"/>
    </location>
</feature>
<feature type="mutagenesis site" description="Important decrease in antibacterial activity and important decrease in helical content." evidence="5">
    <original>K</original>
    <variation>A</variation>
    <location>
        <position position="10"/>
    </location>
</feature>
<feature type="mutagenesis site" description="Important increase in antibacterial activity, important increase in helical content, and decrease in cytotoxicity towards HEK293 cells." evidence="5">
    <original>S</original>
    <variation>A</variation>
    <location>
        <position position="11"/>
    </location>
</feature>
<reference key="1">
    <citation type="journal article" date="2005" name="Peptides">
        <title>Structural and functional characterization of two novel peptide toxins isolated from the venom of the social wasp Polybia paulista.</title>
        <authorList>
            <person name="Souza B.M."/>
            <person name="Mendes M.A."/>
            <person name="Santos L.D."/>
            <person name="Marques M.R."/>
            <person name="Cesar L.M.M."/>
            <person name="Almeida R.N.A."/>
            <person name="Pagnocca F.C."/>
            <person name="Konno K."/>
            <person name="Palma M.S."/>
        </authorList>
    </citation>
    <scope>PROTEIN SEQUENCE</scope>
    <scope>FUNCTION</scope>
    <scope>SUBCELLULAR LOCATION</scope>
    <scope>MASS SPECTROMETRY</scope>
    <scope>AMIDATION AT LEU-12</scope>
    <source>
        <tissue>Venom</tissue>
    </source>
</reference>
<reference key="2">
    <citation type="journal article" date="2011" name="Toxicology">
        <title>Novel cytotoxicity exhibition mode of polybia-CP, a novel antimicrobial peptide from the venom of the social wasp Polybia paulista.</title>
        <authorList>
            <person name="Wang K."/>
            <person name="Yan J."/>
            <person name="Liu X."/>
            <person name="Zhang J."/>
            <person name="Chen R."/>
            <person name="Zhang B."/>
            <person name="Dang W."/>
            <person name="Zhang W."/>
            <person name="Kai M."/>
            <person name="Song J."/>
            <person name="Wang R."/>
        </authorList>
    </citation>
    <scope>FUNCTION</scope>
    <scope>SUBCELLULAR LOCATION</scope>
    <scope>SYNTHESIS</scope>
</reference>
<reference key="3">
    <citation type="journal article" date="2012" name="Antimicrob. Agents Chemother.">
        <title>Membrane-active action mode of polybia-CP, a novel antimicrobial peptide isolated from the venom of Polybia paulista.</title>
        <authorList>
            <person name="Wang K."/>
            <person name="Yan J."/>
            <person name="Chen R."/>
            <person name="Dang W."/>
            <person name="Zhang B."/>
            <person name="Zhang W."/>
            <person name="Song J."/>
            <person name="Wang R."/>
        </authorList>
    </citation>
    <scope>FUNCTION</scope>
    <scope>SUBCELLULAR LOCATION</scope>
    <scope>SYNTHESIS</scope>
    <scope>BIOPHYSICOCHEMICAL PROPERTIES</scope>
</reference>
<reference key="4">
    <citation type="journal article" date="2013" name="Antimicrob. Agents Chemother.">
        <title>Membrane perturbation action mode and structure-activity relationships of Protonectin, a novel antimicrobial peptide from the venom of the neotropical social wasp Agelaia pallipes pallipes.</title>
        <authorList>
            <person name="Wang K."/>
            <person name="Dang W."/>
            <person name="Yan J."/>
            <person name="Chen R."/>
            <person name="Liu X."/>
            <person name="Yan W."/>
            <person name="Zhang B."/>
            <person name="Xie J."/>
            <person name="Zhang J."/>
            <person name="Wang R."/>
        </authorList>
    </citation>
    <scope>FUNCTION</scope>
    <scope>SYNTHESIS</scope>
</reference>
<reference key="5">
    <citation type="journal article" date="2018" name="Commun. Biol.">
        <title>Structure-function-guided exploration of the antimicrobial peptide polybia-CP identifies activity determinants and generates synthetic therapeutic candidates.</title>
        <authorList>
            <person name="Torres M.D.T."/>
            <person name="Pedron C.N."/>
            <person name="Higashikuni Y."/>
            <person name="Kramer R.M."/>
            <person name="Cardoso M.H."/>
            <person name="Oshiro K.G.N."/>
            <person name="Franco O.L."/>
            <person name="Silva Junior P.I."/>
            <person name="Silva F.D."/>
            <person name="Oliveira Junior V.X."/>
            <person name="Lu T.K."/>
            <person name="de la Fuente-Nunez C."/>
        </authorList>
    </citation>
    <scope>FUNCTION</scope>
    <scope>MUTAGENESIS OF ILE-1; THR-4; ILE-5; LEU-6; GLY-7; LYS-10 AND SER-11</scope>
    <scope>PHARMACEUTICAL</scope>
</reference>
<reference key="6">
    <citation type="journal article" date="2020" name="Toxicon">
        <title>Wasp venom peptide as a new antichagasic agent.</title>
        <authorList>
            <person name="Freire K.A."/>
            <person name="Torres M.T."/>
            <person name="Lima D.B."/>
            <person name="Monteiro M.L."/>
            <person name="Bezerra de Menezes R.R.P.P."/>
            <person name="Martins A.M.C."/>
            <person name="Oliveira V.X. Jr."/>
        </authorList>
    </citation>
    <scope>FUNCTION</scope>
    <scope>SYNTHESIS</scope>
    <scope>PHARMACEUTICAL</scope>
</reference>
<organism>
    <name type="scientific">Polybia paulista</name>
    <name type="common">Neotropical social wasp</name>
    <name type="synonym">Swarm-founding polistine wasp</name>
    <dbReference type="NCBI Taxonomy" id="291283"/>
    <lineage>
        <taxon>Eukaryota</taxon>
        <taxon>Metazoa</taxon>
        <taxon>Ecdysozoa</taxon>
        <taxon>Arthropoda</taxon>
        <taxon>Hexapoda</taxon>
        <taxon>Insecta</taxon>
        <taxon>Pterygota</taxon>
        <taxon>Neoptera</taxon>
        <taxon>Endopterygota</taxon>
        <taxon>Hymenoptera</taxon>
        <taxon>Apocrita</taxon>
        <taxon>Aculeata</taxon>
        <taxon>Vespoidea</taxon>
        <taxon>Vespidae</taxon>
        <taxon>Polistinae</taxon>
        <taxon>Epiponini</taxon>
        <taxon>Polybia</taxon>
    </lineage>
</organism>
<evidence type="ECO:0000269" key="1">
    <source>
    </source>
</evidence>
<evidence type="ECO:0000269" key="2">
    <source>
    </source>
</evidence>
<evidence type="ECO:0000269" key="3">
    <source>
    </source>
</evidence>
<evidence type="ECO:0000269" key="4">
    <source>
    </source>
</evidence>
<evidence type="ECO:0000269" key="5">
    <source>
    </source>
</evidence>
<evidence type="ECO:0000269" key="6">
    <source>
    </source>
</evidence>
<evidence type="ECO:0000303" key="7">
    <source>
    </source>
</evidence>
<evidence type="ECO:0000303" key="8">
    <source>
    </source>
</evidence>
<evidence type="ECO:0000303" key="9">
    <source>
    </source>
</evidence>
<evidence type="ECO:0000305" key="10"/>
<evidence type="ECO:0000305" key="11">
    <source>
    </source>
</evidence>
<evidence type="ECO:0000305" key="12">
    <source>
    </source>
</evidence>
<evidence type="ECO:0000305" key="13">
    <source>
    </source>
</evidence>
<dbReference type="GO" id="GO:0005576">
    <property type="term" value="C:extracellular region"/>
    <property type="evidence" value="ECO:0000314"/>
    <property type="project" value="UniProtKB"/>
</dbReference>
<dbReference type="GO" id="GO:0016020">
    <property type="term" value="C:membrane"/>
    <property type="evidence" value="ECO:0007669"/>
    <property type="project" value="UniProtKB-KW"/>
</dbReference>
<dbReference type="GO" id="GO:0044218">
    <property type="term" value="C:other organism cell membrane"/>
    <property type="evidence" value="ECO:0007669"/>
    <property type="project" value="UniProtKB-KW"/>
</dbReference>
<dbReference type="GO" id="GO:0006935">
    <property type="term" value="P:chemotaxis"/>
    <property type="evidence" value="ECO:0007669"/>
    <property type="project" value="UniProtKB-KW"/>
</dbReference>
<dbReference type="GO" id="GO:0050829">
    <property type="term" value="P:defense response to Gram-negative bacterium"/>
    <property type="evidence" value="ECO:0000314"/>
    <property type="project" value="UniProtKB"/>
</dbReference>
<dbReference type="GO" id="GO:0050830">
    <property type="term" value="P:defense response to Gram-positive bacterium"/>
    <property type="evidence" value="ECO:0000314"/>
    <property type="project" value="UniProtKB"/>
</dbReference>
<dbReference type="GO" id="GO:0045087">
    <property type="term" value="P:innate immune response"/>
    <property type="evidence" value="ECO:0007669"/>
    <property type="project" value="UniProtKB-KW"/>
</dbReference>
<dbReference type="GO" id="GO:0050921">
    <property type="term" value="P:positive regulation of chemotaxis"/>
    <property type="evidence" value="ECO:0000314"/>
    <property type="project" value="UniProtKB"/>
</dbReference>
<proteinExistence type="evidence at protein level"/>
<protein>
    <recommendedName>
        <fullName evidence="7 8 9">Polybia-CP</fullName>
    </recommendedName>
    <alternativeName>
        <fullName evidence="8 9">Pol-CP-NH2</fullName>
    </alternativeName>
    <alternativeName>
        <fullName evidence="7">Polybia chemotactic peptide</fullName>
    </alternativeName>
</protein>